<feature type="chain" id="PRO_0000141861" description="3-isopropylmalate dehydratase small subunit">
    <location>
        <begin position="1"/>
        <end position="213"/>
    </location>
</feature>
<sequence>MKAFTQHHGLVAPLDRANVDTDQIIPKQFLKSIKRTGFGPNLFDEWRYLDVGQPYQDNSKRPLNPDFVLNHERYQGASVLLARENFGCGSSREHAPWALEEYGFCAIIAPSYADIFFNNSFKNGLLPIILSEEDVDQLFKQVEASPGYQLSIDLQAQTVTRPDGKVLSFEIDAFRKHCLLNGLDDIGLTLMDAEAIAGFESRHRASQPWLFRD</sequence>
<accession>Q4ZUZ5</accession>
<proteinExistence type="inferred from homology"/>
<dbReference type="EC" id="4.2.1.33" evidence="1"/>
<dbReference type="EMBL" id="CP000075">
    <property type="protein sequence ID" value="AAY37027.1"/>
    <property type="molecule type" value="Genomic_DNA"/>
</dbReference>
<dbReference type="RefSeq" id="WP_011267363.1">
    <property type="nucleotide sequence ID" value="NC_007005.1"/>
</dbReference>
<dbReference type="RefSeq" id="YP_235065.1">
    <property type="nucleotide sequence ID" value="NC_007005.1"/>
</dbReference>
<dbReference type="SMR" id="Q4ZUZ5"/>
<dbReference type="STRING" id="205918.Psyr_1984"/>
<dbReference type="KEGG" id="psb:Psyr_1984"/>
<dbReference type="PATRIC" id="fig|205918.7.peg.2027"/>
<dbReference type="eggNOG" id="COG0066">
    <property type="taxonomic scope" value="Bacteria"/>
</dbReference>
<dbReference type="HOGENOM" id="CLU_081378_0_3_6"/>
<dbReference type="OrthoDB" id="9777465at2"/>
<dbReference type="UniPathway" id="UPA00048">
    <property type="reaction ID" value="UER00071"/>
</dbReference>
<dbReference type="Proteomes" id="UP000000426">
    <property type="component" value="Chromosome"/>
</dbReference>
<dbReference type="GO" id="GO:0009316">
    <property type="term" value="C:3-isopropylmalate dehydratase complex"/>
    <property type="evidence" value="ECO:0007669"/>
    <property type="project" value="InterPro"/>
</dbReference>
<dbReference type="GO" id="GO:0003861">
    <property type="term" value="F:3-isopropylmalate dehydratase activity"/>
    <property type="evidence" value="ECO:0007669"/>
    <property type="project" value="UniProtKB-UniRule"/>
</dbReference>
<dbReference type="GO" id="GO:0009098">
    <property type="term" value="P:L-leucine biosynthetic process"/>
    <property type="evidence" value="ECO:0007669"/>
    <property type="project" value="UniProtKB-UniRule"/>
</dbReference>
<dbReference type="CDD" id="cd01577">
    <property type="entry name" value="IPMI_Swivel"/>
    <property type="match status" value="1"/>
</dbReference>
<dbReference type="FunFam" id="3.20.19.10:FF:000003">
    <property type="entry name" value="3-isopropylmalate dehydratase small subunit"/>
    <property type="match status" value="1"/>
</dbReference>
<dbReference type="Gene3D" id="3.20.19.10">
    <property type="entry name" value="Aconitase, domain 4"/>
    <property type="match status" value="1"/>
</dbReference>
<dbReference type="HAMAP" id="MF_01031">
    <property type="entry name" value="LeuD_type1"/>
    <property type="match status" value="1"/>
</dbReference>
<dbReference type="InterPro" id="IPR004431">
    <property type="entry name" value="3-IsopropMal_deHydase_ssu"/>
</dbReference>
<dbReference type="InterPro" id="IPR015928">
    <property type="entry name" value="Aconitase/3IPM_dehydase_swvl"/>
</dbReference>
<dbReference type="InterPro" id="IPR000573">
    <property type="entry name" value="AconitaseA/IPMdHydase_ssu_swvl"/>
</dbReference>
<dbReference type="InterPro" id="IPR033940">
    <property type="entry name" value="IPMI_Swivel"/>
</dbReference>
<dbReference type="InterPro" id="IPR050075">
    <property type="entry name" value="LeuD"/>
</dbReference>
<dbReference type="NCBIfam" id="TIGR00171">
    <property type="entry name" value="leuD"/>
    <property type="match status" value="1"/>
</dbReference>
<dbReference type="NCBIfam" id="NF002458">
    <property type="entry name" value="PRK01641.1"/>
    <property type="match status" value="1"/>
</dbReference>
<dbReference type="PANTHER" id="PTHR43345:SF5">
    <property type="entry name" value="3-ISOPROPYLMALATE DEHYDRATASE SMALL SUBUNIT"/>
    <property type="match status" value="1"/>
</dbReference>
<dbReference type="PANTHER" id="PTHR43345">
    <property type="entry name" value="3-ISOPROPYLMALATE DEHYDRATASE SMALL SUBUNIT 2-RELATED-RELATED"/>
    <property type="match status" value="1"/>
</dbReference>
<dbReference type="Pfam" id="PF00694">
    <property type="entry name" value="Aconitase_C"/>
    <property type="match status" value="1"/>
</dbReference>
<dbReference type="SUPFAM" id="SSF52016">
    <property type="entry name" value="LeuD/IlvD-like"/>
    <property type="match status" value="1"/>
</dbReference>
<protein>
    <recommendedName>
        <fullName evidence="1">3-isopropylmalate dehydratase small subunit</fullName>
        <ecNumber evidence="1">4.2.1.33</ecNumber>
    </recommendedName>
    <alternativeName>
        <fullName evidence="1">Alpha-IPM isomerase</fullName>
        <shortName evidence="1">IPMI</shortName>
    </alternativeName>
    <alternativeName>
        <fullName evidence="1">Isopropylmalate isomerase</fullName>
    </alternativeName>
</protein>
<organism>
    <name type="scientific">Pseudomonas syringae pv. syringae (strain B728a)</name>
    <dbReference type="NCBI Taxonomy" id="205918"/>
    <lineage>
        <taxon>Bacteria</taxon>
        <taxon>Pseudomonadati</taxon>
        <taxon>Pseudomonadota</taxon>
        <taxon>Gammaproteobacteria</taxon>
        <taxon>Pseudomonadales</taxon>
        <taxon>Pseudomonadaceae</taxon>
        <taxon>Pseudomonas</taxon>
        <taxon>Pseudomonas syringae</taxon>
    </lineage>
</organism>
<gene>
    <name evidence="1" type="primary">leuD</name>
    <name type="ordered locus">Psyr_1984</name>
</gene>
<keyword id="KW-0028">Amino-acid biosynthesis</keyword>
<keyword id="KW-0100">Branched-chain amino acid biosynthesis</keyword>
<keyword id="KW-0432">Leucine biosynthesis</keyword>
<keyword id="KW-0456">Lyase</keyword>
<reference key="1">
    <citation type="journal article" date="2005" name="Proc. Natl. Acad. Sci. U.S.A.">
        <title>Comparison of the complete genome sequences of Pseudomonas syringae pv. syringae B728a and pv. tomato DC3000.</title>
        <authorList>
            <person name="Feil H."/>
            <person name="Feil W.S."/>
            <person name="Chain P."/>
            <person name="Larimer F."/>
            <person name="Dibartolo G."/>
            <person name="Copeland A."/>
            <person name="Lykidis A."/>
            <person name="Trong S."/>
            <person name="Nolan M."/>
            <person name="Goltsman E."/>
            <person name="Thiel J."/>
            <person name="Malfatti S."/>
            <person name="Loper J.E."/>
            <person name="Lapidus A."/>
            <person name="Detter J.C."/>
            <person name="Land M."/>
            <person name="Richardson P.M."/>
            <person name="Kyrpides N.C."/>
            <person name="Ivanova N."/>
            <person name="Lindow S.E."/>
        </authorList>
    </citation>
    <scope>NUCLEOTIDE SEQUENCE [LARGE SCALE GENOMIC DNA]</scope>
    <source>
        <strain>B728a</strain>
    </source>
</reference>
<comment type="function">
    <text evidence="1">Catalyzes the isomerization between 2-isopropylmalate and 3-isopropylmalate, via the formation of 2-isopropylmaleate.</text>
</comment>
<comment type="catalytic activity">
    <reaction evidence="1">
        <text>(2R,3S)-3-isopropylmalate = (2S)-2-isopropylmalate</text>
        <dbReference type="Rhea" id="RHEA:32287"/>
        <dbReference type="ChEBI" id="CHEBI:1178"/>
        <dbReference type="ChEBI" id="CHEBI:35121"/>
        <dbReference type="EC" id="4.2.1.33"/>
    </reaction>
</comment>
<comment type="pathway">
    <text evidence="1">Amino-acid biosynthesis; L-leucine biosynthesis; L-leucine from 3-methyl-2-oxobutanoate: step 2/4.</text>
</comment>
<comment type="subunit">
    <text evidence="1">Heterodimer of LeuC and LeuD.</text>
</comment>
<comment type="similarity">
    <text evidence="1">Belongs to the LeuD family. LeuD type 1 subfamily.</text>
</comment>
<name>LEUD_PSEU2</name>
<evidence type="ECO:0000255" key="1">
    <source>
        <dbReference type="HAMAP-Rule" id="MF_01031"/>
    </source>
</evidence>